<accession>Q2A515</accession>
<keyword id="KW-0342">GTP-binding</keyword>
<keyword id="KW-0547">Nucleotide-binding</keyword>
<keyword id="KW-1185">Reference proteome</keyword>
<keyword id="KW-0677">Repeat</keyword>
<keyword id="KW-0690">Ribosome biogenesis</keyword>
<feature type="chain" id="PRO_1000011625" description="GTPase Der">
    <location>
        <begin position="1"/>
        <end position="465"/>
    </location>
</feature>
<feature type="domain" description="EngA-type G 1">
    <location>
        <begin position="3"/>
        <end position="166"/>
    </location>
</feature>
<feature type="domain" description="EngA-type G 2">
    <location>
        <begin position="184"/>
        <end position="358"/>
    </location>
</feature>
<feature type="domain" description="KH-like" evidence="1">
    <location>
        <begin position="359"/>
        <end position="443"/>
    </location>
</feature>
<feature type="region of interest" description="Disordered" evidence="2">
    <location>
        <begin position="446"/>
        <end position="465"/>
    </location>
</feature>
<feature type="binding site" evidence="1">
    <location>
        <begin position="9"/>
        <end position="16"/>
    </location>
    <ligand>
        <name>GTP</name>
        <dbReference type="ChEBI" id="CHEBI:37565"/>
        <label>1</label>
    </ligand>
</feature>
<feature type="binding site" evidence="1">
    <location>
        <begin position="56"/>
        <end position="60"/>
    </location>
    <ligand>
        <name>GTP</name>
        <dbReference type="ChEBI" id="CHEBI:37565"/>
        <label>1</label>
    </ligand>
</feature>
<feature type="binding site" evidence="1">
    <location>
        <begin position="118"/>
        <end position="121"/>
    </location>
    <ligand>
        <name>GTP</name>
        <dbReference type="ChEBI" id="CHEBI:37565"/>
        <label>1</label>
    </ligand>
</feature>
<feature type="binding site" evidence="1">
    <location>
        <begin position="190"/>
        <end position="197"/>
    </location>
    <ligand>
        <name>GTP</name>
        <dbReference type="ChEBI" id="CHEBI:37565"/>
        <label>2</label>
    </ligand>
</feature>
<feature type="binding site" evidence="1">
    <location>
        <begin position="237"/>
        <end position="241"/>
    </location>
    <ligand>
        <name>GTP</name>
        <dbReference type="ChEBI" id="CHEBI:37565"/>
        <label>2</label>
    </ligand>
</feature>
<feature type="binding site" evidence="1">
    <location>
        <begin position="302"/>
        <end position="305"/>
    </location>
    <ligand>
        <name>GTP</name>
        <dbReference type="ChEBI" id="CHEBI:37565"/>
        <label>2</label>
    </ligand>
</feature>
<comment type="function">
    <text evidence="1">GTPase that plays an essential role in the late steps of ribosome biogenesis.</text>
</comment>
<comment type="subunit">
    <text evidence="1">Associates with the 50S ribosomal subunit.</text>
</comment>
<comment type="similarity">
    <text evidence="1">Belongs to the TRAFAC class TrmE-Era-EngA-EngB-Septin-like GTPase superfamily. EngA (Der) GTPase family.</text>
</comment>
<sequence length="465" mass="52469">MSFLVAIVGRANVGKSTLFNVLTNSHDALVFDFEGVTRDRQYGQAKYDDLDYLVVDTGGISDKDVGFDEFMAKQSQIAIDEANLVFFVVDGRSGLTTGDEYVASLLRQKDKKVVVVVNKVDGTDEEAAMAEFYSFGFDKVFAISAAHRRNTQKLVDKFLKKPLNEYYQDYTQTQEHKEQQRHGIHFSLIGRPNVGKSTLTNRMLGEDRVVVFDMPGTTIDSVSIPFERHGQKYTIVDTAGVRKRGKVKQTLEKFSVIKTLQAIQDSNVVVAVVDARQGISDQDLSLIHFAIKNGRALVLAVNKWDGMTEEDRIQVKQDLKRKLFFLQDYVDIHFISALYGTNVGHVFESIDTAYACANKKITTADATRLMQLAVEAHSPPMVGKFRIKLKYAHVGGHNPPVIVIHGNQVSRLPNSYKRYLENFFREALDFRGTPIVFEFKQSENPFADRKNKRSKDEGSKSKKVK</sequence>
<protein>
    <recommendedName>
        <fullName evidence="1">GTPase Der</fullName>
    </recommendedName>
    <alternativeName>
        <fullName evidence="1">GTP-binding protein EngA</fullName>
    </alternativeName>
</protein>
<reference key="1">
    <citation type="submission" date="2006-03" db="EMBL/GenBank/DDBJ databases">
        <title>Complete genome sequence of Francisella tularensis LVS (Live Vaccine Strain).</title>
        <authorList>
            <person name="Chain P."/>
            <person name="Larimer F."/>
            <person name="Land M."/>
            <person name="Stilwagen S."/>
            <person name="Larsson P."/>
            <person name="Bearden S."/>
            <person name="Chu M."/>
            <person name="Oyston P."/>
            <person name="Forsman M."/>
            <person name="Andersson S."/>
            <person name="Lindler L."/>
            <person name="Titball R."/>
            <person name="Garcia E."/>
        </authorList>
    </citation>
    <scope>NUCLEOTIDE SEQUENCE [LARGE SCALE GENOMIC DNA]</scope>
    <source>
        <strain>LVS</strain>
    </source>
</reference>
<gene>
    <name evidence="1" type="primary">der</name>
    <name type="synonym">engA</name>
    <name type="ordered locus">FTL_0414</name>
</gene>
<organism>
    <name type="scientific">Francisella tularensis subsp. holarctica (strain LVS)</name>
    <dbReference type="NCBI Taxonomy" id="376619"/>
    <lineage>
        <taxon>Bacteria</taxon>
        <taxon>Pseudomonadati</taxon>
        <taxon>Pseudomonadota</taxon>
        <taxon>Gammaproteobacteria</taxon>
        <taxon>Thiotrichales</taxon>
        <taxon>Francisellaceae</taxon>
        <taxon>Francisella</taxon>
    </lineage>
</organism>
<evidence type="ECO:0000255" key="1">
    <source>
        <dbReference type="HAMAP-Rule" id="MF_00195"/>
    </source>
</evidence>
<evidence type="ECO:0000256" key="2">
    <source>
        <dbReference type="SAM" id="MobiDB-lite"/>
    </source>
</evidence>
<proteinExistence type="inferred from homology"/>
<name>DER_FRATH</name>
<dbReference type="EMBL" id="AM233362">
    <property type="protein sequence ID" value="CAJ78854.1"/>
    <property type="molecule type" value="Genomic_DNA"/>
</dbReference>
<dbReference type="RefSeq" id="WP_003014664.1">
    <property type="nucleotide sequence ID" value="NZ_CP009694.1"/>
</dbReference>
<dbReference type="SMR" id="Q2A515"/>
<dbReference type="KEGG" id="ftl:FTL_0414"/>
<dbReference type="Proteomes" id="UP000001944">
    <property type="component" value="Chromosome"/>
</dbReference>
<dbReference type="GO" id="GO:0005525">
    <property type="term" value="F:GTP binding"/>
    <property type="evidence" value="ECO:0007669"/>
    <property type="project" value="UniProtKB-UniRule"/>
</dbReference>
<dbReference type="GO" id="GO:0043022">
    <property type="term" value="F:ribosome binding"/>
    <property type="evidence" value="ECO:0007669"/>
    <property type="project" value="TreeGrafter"/>
</dbReference>
<dbReference type="GO" id="GO:0042254">
    <property type="term" value="P:ribosome biogenesis"/>
    <property type="evidence" value="ECO:0007669"/>
    <property type="project" value="UniProtKB-KW"/>
</dbReference>
<dbReference type="CDD" id="cd01894">
    <property type="entry name" value="EngA1"/>
    <property type="match status" value="1"/>
</dbReference>
<dbReference type="CDD" id="cd01895">
    <property type="entry name" value="EngA2"/>
    <property type="match status" value="1"/>
</dbReference>
<dbReference type="FunFam" id="3.30.300.20:FF:000004">
    <property type="entry name" value="GTPase Der"/>
    <property type="match status" value="1"/>
</dbReference>
<dbReference type="FunFam" id="3.40.50.300:FF:000040">
    <property type="entry name" value="GTPase Der"/>
    <property type="match status" value="1"/>
</dbReference>
<dbReference type="FunFam" id="3.40.50.300:FF:000057">
    <property type="entry name" value="GTPase Der"/>
    <property type="match status" value="1"/>
</dbReference>
<dbReference type="Gene3D" id="3.30.300.20">
    <property type="match status" value="1"/>
</dbReference>
<dbReference type="Gene3D" id="3.40.50.300">
    <property type="entry name" value="P-loop containing nucleotide triphosphate hydrolases"/>
    <property type="match status" value="2"/>
</dbReference>
<dbReference type="HAMAP" id="MF_00195">
    <property type="entry name" value="GTPase_Der"/>
    <property type="match status" value="1"/>
</dbReference>
<dbReference type="InterPro" id="IPR031166">
    <property type="entry name" value="G_ENGA"/>
</dbReference>
<dbReference type="InterPro" id="IPR006073">
    <property type="entry name" value="GTP-bd"/>
</dbReference>
<dbReference type="InterPro" id="IPR016484">
    <property type="entry name" value="GTPase_Der"/>
</dbReference>
<dbReference type="InterPro" id="IPR032859">
    <property type="entry name" value="KH_dom-like"/>
</dbReference>
<dbReference type="InterPro" id="IPR015946">
    <property type="entry name" value="KH_dom-like_a/b"/>
</dbReference>
<dbReference type="InterPro" id="IPR027417">
    <property type="entry name" value="P-loop_NTPase"/>
</dbReference>
<dbReference type="InterPro" id="IPR005225">
    <property type="entry name" value="Small_GTP-bd"/>
</dbReference>
<dbReference type="NCBIfam" id="TIGR03594">
    <property type="entry name" value="GTPase_EngA"/>
    <property type="match status" value="1"/>
</dbReference>
<dbReference type="NCBIfam" id="TIGR00231">
    <property type="entry name" value="small_GTP"/>
    <property type="match status" value="2"/>
</dbReference>
<dbReference type="PANTHER" id="PTHR43834">
    <property type="entry name" value="GTPASE DER"/>
    <property type="match status" value="1"/>
</dbReference>
<dbReference type="PANTHER" id="PTHR43834:SF6">
    <property type="entry name" value="GTPASE DER"/>
    <property type="match status" value="1"/>
</dbReference>
<dbReference type="Pfam" id="PF14714">
    <property type="entry name" value="KH_dom-like"/>
    <property type="match status" value="1"/>
</dbReference>
<dbReference type="Pfam" id="PF01926">
    <property type="entry name" value="MMR_HSR1"/>
    <property type="match status" value="2"/>
</dbReference>
<dbReference type="PIRSF" id="PIRSF006485">
    <property type="entry name" value="GTP-binding_EngA"/>
    <property type="match status" value="1"/>
</dbReference>
<dbReference type="PRINTS" id="PR00326">
    <property type="entry name" value="GTP1OBG"/>
</dbReference>
<dbReference type="SUPFAM" id="SSF52540">
    <property type="entry name" value="P-loop containing nucleoside triphosphate hydrolases"/>
    <property type="match status" value="2"/>
</dbReference>
<dbReference type="PROSITE" id="PS51712">
    <property type="entry name" value="G_ENGA"/>
    <property type="match status" value="2"/>
</dbReference>